<accession>Q9PM01</accession>
<accession>Q0P7V3</accession>
<proteinExistence type="inferred from homology"/>
<gene>
    <name evidence="1" type="primary">murB</name>
    <name type="ordered locus">Cj1676</name>
</gene>
<reference key="1">
    <citation type="journal article" date="2000" name="Nature">
        <title>The genome sequence of the food-borne pathogen Campylobacter jejuni reveals hypervariable sequences.</title>
        <authorList>
            <person name="Parkhill J."/>
            <person name="Wren B.W."/>
            <person name="Mungall K.L."/>
            <person name="Ketley J.M."/>
            <person name="Churcher C.M."/>
            <person name="Basham D."/>
            <person name="Chillingworth T."/>
            <person name="Davies R.M."/>
            <person name="Feltwell T."/>
            <person name="Holroyd S."/>
            <person name="Jagels K."/>
            <person name="Karlyshev A.V."/>
            <person name="Moule S."/>
            <person name="Pallen M.J."/>
            <person name="Penn C.W."/>
            <person name="Quail M.A."/>
            <person name="Rajandream M.A."/>
            <person name="Rutherford K.M."/>
            <person name="van Vliet A.H.M."/>
            <person name="Whitehead S."/>
            <person name="Barrell B.G."/>
        </authorList>
    </citation>
    <scope>NUCLEOTIDE SEQUENCE [LARGE SCALE GENOMIC DNA]</scope>
    <source>
        <strain>ATCC 700819 / NCTC 11168</strain>
    </source>
</reference>
<protein>
    <recommendedName>
        <fullName evidence="1">UDP-N-acetylenolpyruvoylglucosamine reductase</fullName>
        <ecNumber evidence="1">1.3.1.98</ecNumber>
    </recommendedName>
    <alternativeName>
        <fullName evidence="1">UDP-N-acetylmuramate dehydrogenase</fullName>
    </alternativeName>
</protein>
<comment type="function">
    <text evidence="1">Cell wall formation.</text>
</comment>
<comment type="catalytic activity">
    <reaction evidence="1">
        <text>UDP-N-acetyl-alpha-D-muramate + NADP(+) = UDP-N-acetyl-3-O-(1-carboxyvinyl)-alpha-D-glucosamine + NADPH + H(+)</text>
        <dbReference type="Rhea" id="RHEA:12248"/>
        <dbReference type="ChEBI" id="CHEBI:15378"/>
        <dbReference type="ChEBI" id="CHEBI:57783"/>
        <dbReference type="ChEBI" id="CHEBI:58349"/>
        <dbReference type="ChEBI" id="CHEBI:68483"/>
        <dbReference type="ChEBI" id="CHEBI:70757"/>
        <dbReference type="EC" id="1.3.1.98"/>
    </reaction>
</comment>
<comment type="cofactor">
    <cofactor evidence="1">
        <name>FAD</name>
        <dbReference type="ChEBI" id="CHEBI:57692"/>
    </cofactor>
</comment>
<comment type="pathway">
    <text evidence="1">Cell wall biogenesis; peptidoglycan biosynthesis.</text>
</comment>
<comment type="subcellular location">
    <subcellularLocation>
        <location evidence="1">Cytoplasm</location>
    </subcellularLocation>
</comment>
<comment type="similarity">
    <text evidence="1">Belongs to the MurB family.</text>
</comment>
<feature type="chain" id="PRO_0000179190" description="UDP-N-acetylenolpyruvoylglucosamine reductase">
    <location>
        <begin position="1"/>
        <end position="258"/>
    </location>
</feature>
<feature type="active site" evidence="1">
    <location>
        <position position="142"/>
    </location>
</feature>
<feature type="active site" description="Proton donor" evidence="1">
    <location>
        <position position="184"/>
    </location>
</feature>
<feature type="active site" evidence="1">
    <location>
        <position position="254"/>
    </location>
</feature>
<evidence type="ECO:0000255" key="1">
    <source>
        <dbReference type="HAMAP-Rule" id="MF_00037"/>
    </source>
</evidence>
<dbReference type="EC" id="1.3.1.98" evidence="1"/>
<dbReference type="EMBL" id="AL111168">
    <property type="protein sequence ID" value="CAL35772.1"/>
    <property type="molecule type" value="Genomic_DNA"/>
</dbReference>
<dbReference type="PIR" id="A81265">
    <property type="entry name" value="A81265"/>
</dbReference>
<dbReference type="RefSeq" id="WP_002858257.1">
    <property type="nucleotide sequence ID" value="NZ_SZUC01000002.1"/>
</dbReference>
<dbReference type="RefSeq" id="YP_002345044.1">
    <property type="nucleotide sequence ID" value="NC_002163.1"/>
</dbReference>
<dbReference type="SMR" id="Q9PM01"/>
<dbReference type="IntAct" id="Q9PM01">
    <property type="interactions" value="7"/>
</dbReference>
<dbReference type="STRING" id="192222.Cj1676"/>
<dbReference type="PaxDb" id="192222-Cj1676"/>
<dbReference type="EnsemblBacteria" id="CAL35772">
    <property type="protein sequence ID" value="CAL35772"/>
    <property type="gene ID" value="Cj1676"/>
</dbReference>
<dbReference type="GeneID" id="905951"/>
<dbReference type="KEGG" id="cje:Cj1676"/>
<dbReference type="PATRIC" id="fig|192222.6.peg.1651"/>
<dbReference type="eggNOG" id="COG0812">
    <property type="taxonomic scope" value="Bacteria"/>
</dbReference>
<dbReference type="HOGENOM" id="CLU_035304_1_2_7"/>
<dbReference type="OrthoDB" id="9804753at2"/>
<dbReference type="UniPathway" id="UPA00219"/>
<dbReference type="Proteomes" id="UP000000799">
    <property type="component" value="Chromosome"/>
</dbReference>
<dbReference type="GO" id="GO:0005829">
    <property type="term" value="C:cytosol"/>
    <property type="evidence" value="ECO:0007669"/>
    <property type="project" value="TreeGrafter"/>
</dbReference>
<dbReference type="GO" id="GO:0050660">
    <property type="term" value="F:flavin adenine dinucleotide binding"/>
    <property type="evidence" value="ECO:0007669"/>
    <property type="project" value="InterPro"/>
</dbReference>
<dbReference type="GO" id="GO:0008762">
    <property type="term" value="F:UDP-N-acetylmuramate dehydrogenase activity"/>
    <property type="evidence" value="ECO:0007669"/>
    <property type="project" value="UniProtKB-UniRule"/>
</dbReference>
<dbReference type="GO" id="GO:0051301">
    <property type="term" value="P:cell division"/>
    <property type="evidence" value="ECO:0007669"/>
    <property type="project" value="UniProtKB-KW"/>
</dbReference>
<dbReference type="GO" id="GO:0071555">
    <property type="term" value="P:cell wall organization"/>
    <property type="evidence" value="ECO:0007669"/>
    <property type="project" value="UniProtKB-KW"/>
</dbReference>
<dbReference type="GO" id="GO:0009252">
    <property type="term" value="P:peptidoglycan biosynthetic process"/>
    <property type="evidence" value="ECO:0007669"/>
    <property type="project" value="UniProtKB-UniRule"/>
</dbReference>
<dbReference type="GO" id="GO:0008360">
    <property type="term" value="P:regulation of cell shape"/>
    <property type="evidence" value="ECO:0007669"/>
    <property type="project" value="UniProtKB-KW"/>
</dbReference>
<dbReference type="Gene3D" id="3.30.465.10">
    <property type="match status" value="1"/>
</dbReference>
<dbReference type="Gene3D" id="3.90.78.10">
    <property type="entry name" value="UDP-N-acetylenolpyruvoylglucosamine reductase, C-terminal domain"/>
    <property type="match status" value="1"/>
</dbReference>
<dbReference type="HAMAP" id="MF_00037">
    <property type="entry name" value="MurB"/>
    <property type="match status" value="1"/>
</dbReference>
<dbReference type="InterPro" id="IPR036318">
    <property type="entry name" value="FAD-bd_PCMH-like_sf"/>
</dbReference>
<dbReference type="InterPro" id="IPR016169">
    <property type="entry name" value="FAD-bd_PCMH_sub2"/>
</dbReference>
<dbReference type="InterPro" id="IPR003170">
    <property type="entry name" value="MurB"/>
</dbReference>
<dbReference type="InterPro" id="IPR011601">
    <property type="entry name" value="MurB_C"/>
</dbReference>
<dbReference type="InterPro" id="IPR036635">
    <property type="entry name" value="MurB_C_sf"/>
</dbReference>
<dbReference type="NCBIfam" id="TIGR00179">
    <property type="entry name" value="murB"/>
    <property type="match status" value="1"/>
</dbReference>
<dbReference type="NCBIfam" id="NF010479">
    <property type="entry name" value="PRK13904.1"/>
    <property type="match status" value="1"/>
</dbReference>
<dbReference type="PANTHER" id="PTHR21071">
    <property type="entry name" value="UDP-N-ACETYLENOLPYRUVOYLGLUCOSAMINE REDUCTASE"/>
    <property type="match status" value="1"/>
</dbReference>
<dbReference type="PANTHER" id="PTHR21071:SF4">
    <property type="entry name" value="UDP-N-ACETYLENOLPYRUVOYLGLUCOSAMINE REDUCTASE"/>
    <property type="match status" value="1"/>
</dbReference>
<dbReference type="Pfam" id="PF02873">
    <property type="entry name" value="MurB_C"/>
    <property type="match status" value="1"/>
</dbReference>
<dbReference type="SUPFAM" id="SSF56176">
    <property type="entry name" value="FAD-binding/transporter-associated domain-like"/>
    <property type="match status" value="1"/>
</dbReference>
<dbReference type="SUPFAM" id="SSF56194">
    <property type="entry name" value="Uridine diphospho-N-Acetylenolpyruvylglucosamine reductase, MurB, C-terminal domain"/>
    <property type="match status" value="1"/>
</dbReference>
<keyword id="KW-0131">Cell cycle</keyword>
<keyword id="KW-0132">Cell division</keyword>
<keyword id="KW-0133">Cell shape</keyword>
<keyword id="KW-0961">Cell wall biogenesis/degradation</keyword>
<keyword id="KW-0963">Cytoplasm</keyword>
<keyword id="KW-0274">FAD</keyword>
<keyword id="KW-0285">Flavoprotein</keyword>
<keyword id="KW-0521">NADP</keyword>
<keyword id="KW-0560">Oxidoreductase</keyword>
<keyword id="KW-0573">Peptidoglycan synthesis</keyword>
<keyword id="KW-1185">Reference proteome</keyword>
<sequence length="258" mass="28994">MIIDFKKYSSVRIGNEFEVLVLDQICDFDGFLIGGANNLLVSPKPKNIGILGDGFNFIQILDRNKDFIHLRIGCKTKSSKMYRFAKENNLKGFEYLSKIPGTLGGLLKMNAGLKGECISQNLIKIATSQGEILRANINFDYRFCPLNTHFFWAEFKLNFGFDTLKDEALKNARSNQPSGASFGSIFKNPKNDFAGRLIEAVGLKGFSKGDAMLSDKHANFLINKKNASFEDAFFLIELARKKVFEEFGTNLENEVIII</sequence>
<organism>
    <name type="scientific">Campylobacter jejuni subsp. jejuni serotype O:2 (strain ATCC 700819 / NCTC 11168)</name>
    <dbReference type="NCBI Taxonomy" id="192222"/>
    <lineage>
        <taxon>Bacteria</taxon>
        <taxon>Pseudomonadati</taxon>
        <taxon>Campylobacterota</taxon>
        <taxon>Epsilonproteobacteria</taxon>
        <taxon>Campylobacterales</taxon>
        <taxon>Campylobacteraceae</taxon>
        <taxon>Campylobacter</taxon>
    </lineage>
</organism>
<name>MURB_CAMJE</name>